<protein>
    <recommendedName>
        <fullName evidence="15">Enoyl-CoA delta isomerase 2</fullName>
        <ecNumber evidence="8">5.3.3.8</ecNumber>
    </recommendedName>
    <alternativeName>
        <fullName>DRS-1</fullName>
    </alternativeName>
    <alternativeName>
        <fullName>Delta(3),delta(2)-enoyl-CoA isomerase</fullName>
        <shortName>D3,D2-enoyl-CoA isomerase</shortName>
    </alternativeName>
    <alternativeName>
        <fullName>Diazepam-binding inhibitor-related protein 1</fullName>
        <shortName>DBI-related protein 1</shortName>
    </alternativeName>
    <alternativeName>
        <fullName>Dodecenoyl-CoA isomerase</fullName>
    </alternativeName>
    <alternativeName>
        <fullName>Hepatocellular carcinoma-associated antigen 88</fullName>
    </alternativeName>
    <alternativeName>
        <fullName>Peroxisomal 3,2-trans-enoyl-CoA isomerase</fullName>
        <shortName evidence="12">pECI</shortName>
    </alternativeName>
    <alternativeName>
        <fullName>Renal carcinoma antigen NY-REN-1</fullName>
    </alternativeName>
</protein>
<comment type="function">
    <text evidence="8">Able to isomerize both 3-cis and 3-trans double bonds into the 2-trans form in a range of enoyl-CoA species. Has a preference for 3-trans substrates.</text>
</comment>
<comment type="catalytic activity">
    <reaction evidence="16">
        <text>a (3Z)-enoyl-CoA = a 4-saturated (2E)-enoyl-CoA</text>
        <dbReference type="Rhea" id="RHEA:45900"/>
        <dbReference type="ChEBI" id="CHEBI:85097"/>
        <dbReference type="ChEBI" id="CHEBI:85489"/>
        <dbReference type="EC" id="5.3.3.8"/>
    </reaction>
    <physiologicalReaction direction="left-to-right" evidence="16">
        <dbReference type="Rhea" id="RHEA:45901"/>
    </physiologicalReaction>
</comment>
<comment type="catalytic activity">
    <reaction evidence="8">
        <text>(3Z)-octenoyl-CoA = (2E)-octenoyl-CoA</text>
        <dbReference type="Rhea" id="RHEA:46044"/>
        <dbReference type="ChEBI" id="CHEBI:62242"/>
        <dbReference type="ChEBI" id="CHEBI:85640"/>
    </reaction>
    <physiologicalReaction direction="left-to-right" evidence="8">
        <dbReference type="Rhea" id="RHEA:46045"/>
    </physiologicalReaction>
</comment>
<comment type="catalytic activity">
    <reaction evidence="3">
        <text>a (3E)-enoyl-CoA = a 4-saturated (2E)-enoyl-CoA</text>
        <dbReference type="Rhea" id="RHEA:45228"/>
        <dbReference type="ChEBI" id="CHEBI:58521"/>
        <dbReference type="ChEBI" id="CHEBI:85097"/>
        <dbReference type="EC" id="5.3.3.8"/>
    </reaction>
    <physiologicalReaction direction="left-to-right" evidence="3">
        <dbReference type="Rhea" id="RHEA:45229"/>
    </physiologicalReaction>
</comment>
<comment type="catalytic activity">
    <reaction evidence="3">
        <text>(2E)-tetradecenoyl-CoA = (3Z)-tetradecenoyl-CoA</text>
        <dbReference type="Rhea" id="RHEA:29847"/>
        <dbReference type="ChEBI" id="CHEBI:61405"/>
        <dbReference type="ChEBI" id="CHEBI:61968"/>
    </reaction>
    <physiologicalReaction direction="right-to-left" evidence="3">
        <dbReference type="Rhea" id="RHEA:29849"/>
    </physiologicalReaction>
</comment>
<comment type="catalytic activity">
    <reaction evidence="3">
        <text>(3E)-tetradecenoyl-CoA = (2E)-tetradecenoyl-CoA</text>
        <dbReference type="Rhea" id="RHEA:47476"/>
        <dbReference type="ChEBI" id="CHEBI:61405"/>
        <dbReference type="ChEBI" id="CHEBI:87710"/>
    </reaction>
    <physiologicalReaction direction="left-to-right" evidence="3">
        <dbReference type="Rhea" id="RHEA:47477"/>
    </physiologicalReaction>
</comment>
<comment type="catalytic activity">
    <reaction evidence="3">
        <text>(3E)-octenoyl-CoA = (2E)-octenoyl-CoA</text>
        <dbReference type="Rhea" id="RHEA:49852"/>
        <dbReference type="ChEBI" id="CHEBI:62242"/>
        <dbReference type="ChEBI" id="CHEBI:131962"/>
    </reaction>
    <physiologicalReaction direction="left-to-right" evidence="3">
        <dbReference type="Rhea" id="RHEA:49853"/>
    </physiologicalReaction>
</comment>
<comment type="catalytic activity">
    <reaction evidence="4">
        <text>(3E)-nonenoyl-CoA = (2E)-nonenoyl-CoA</text>
        <dbReference type="Rhea" id="RHEA:46068"/>
        <dbReference type="ChEBI" id="CHEBI:76292"/>
        <dbReference type="ChEBI" id="CHEBI:85655"/>
    </reaction>
    <physiologicalReaction direction="left-to-right" evidence="4">
        <dbReference type="Rhea" id="RHEA:46069"/>
    </physiologicalReaction>
</comment>
<comment type="pathway">
    <text evidence="8">Lipid metabolism; fatty acid beta-oxidation.</text>
</comment>
<comment type="interaction">
    <interactant intactId="EBI-2512024">
        <id>O75521</id>
    </interactant>
    <interactant intactId="EBI-711968">
        <id>Q13011</id>
        <label>ECH1</label>
    </interactant>
    <organismsDiffer>false</organismsDiffer>
    <experiments>6</experiments>
</comment>
<comment type="interaction">
    <interactant intactId="EBI-2512024">
        <id>O75521</id>
    </interactant>
    <interactant intactId="EBI-1042571">
        <id>Q9Y5L0</id>
        <label>TNPO3</label>
    </interactant>
    <organismsDiffer>false</organismsDiffer>
    <experiments>3</experiments>
</comment>
<comment type="subcellular location">
    <molecule>Isoform 1</molecule>
    <subcellularLocation>
        <location evidence="3">Mitochondrion</location>
    </subcellularLocation>
</comment>
<comment type="subcellular location">
    <molecule>Isoform 2</molecule>
    <subcellularLocation>
        <location evidence="8">Peroxisome matrix</location>
    </subcellularLocation>
</comment>
<comment type="alternative products">
    <event type="alternative splicing"/>
    <isoform>
        <id>O75521-1</id>
        <name>1</name>
        <sequence type="displayed"/>
    </isoform>
    <isoform>
        <id>O75521-2</id>
        <name>2</name>
        <name evidence="10 12">PECI</name>
        <sequence type="described" ref="VSP_037854"/>
    </isoform>
</comment>
<comment type="tissue specificity">
    <text evidence="8 10">Abundant in heart, skeletal muscle and liver. Expressed in CD34(+) T-cells and CD34(+) bone marrow cells.</text>
</comment>
<comment type="similarity">
    <text evidence="15">In the C-terminal section; belongs to the enoyl-CoA hydratase/isomerase family.</text>
</comment>
<comment type="caution">
    <text evidence="15">It is uncertain whether Met-1 or Met-3 is the initiator.</text>
</comment>
<comment type="sequence caution" evidence="15">
    <conflict type="erroneous initiation">
        <sequence resource="EMBL-CDS" id="AAC19317"/>
    </conflict>
    <text>Extended N-terminus.</text>
</comment>
<comment type="sequence caution" evidence="15">
    <conflict type="erroneous initiation">
        <sequence resource="EMBL-CDS" id="AAD34173"/>
    </conflict>
    <text>Truncated N-terminus.</text>
</comment>
<comment type="sequence caution" evidence="15">
    <conflict type="erroneous initiation">
        <sequence resource="EMBL-CDS" id="AAF66247"/>
    </conflict>
    <text>Truncated N-terminus.</text>
</comment>
<comment type="sequence caution" evidence="15">
    <conflict type="erroneous initiation">
        <sequence resource="EMBL-CDS" id="AAH02668"/>
    </conflict>
    <text>Truncated N-terminus.</text>
</comment>
<comment type="sequence caution" evidence="15">
    <conflict type="erroneous initiation">
        <sequence resource="EMBL-CDS" id="AAH16781"/>
    </conflict>
    <text>Extended N-terminus.</text>
</comment>
<comment type="sequence caution" evidence="15">
    <conflict type="erroneous initiation">
        <sequence resource="EMBL-CDS" id="AAH17474"/>
    </conflict>
    <text>Extended N-terminus.</text>
</comment>
<comment type="sequence caution" evidence="15">
    <conflict type="erroneous initiation">
        <sequence resource="EMBL-CDS" id="AAH33841"/>
    </conflict>
    <text>Extended N-terminus.</text>
</comment>
<comment type="sequence caution" evidence="15">
    <conflict type="erroneous initiation">
        <sequence resource="EMBL-CDS" id="AAH34702"/>
    </conflict>
    <text>Extended N-terminus.</text>
</comment>
<comment type="sequence caution" evidence="15">
    <conflict type="erroneous initiation">
        <sequence resource="EMBL-CDS" id="BAG52068"/>
    </conflict>
    <text>Extended N-terminus.</text>
</comment>
<keyword id="KW-0002">3D-structure</keyword>
<keyword id="KW-0007">Acetylation</keyword>
<keyword id="KW-0025">Alternative splicing</keyword>
<keyword id="KW-0413">Isomerase</keyword>
<keyword id="KW-0496">Mitochondrion</keyword>
<keyword id="KW-0576">Peroxisome</keyword>
<keyword id="KW-0597">Phosphoprotein</keyword>
<keyword id="KW-1267">Proteomics identification</keyword>
<keyword id="KW-1185">Reference proteome</keyword>
<keyword id="KW-0809">Transit peptide</keyword>
<proteinExistence type="evidence at protein level"/>
<feature type="transit peptide" description="Mitochondrion" evidence="5">
    <location>
        <begin position="1"/>
        <end position="38"/>
    </location>
</feature>
<feature type="chain" id="PRO_0000214027" description="Enoyl-CoA delta isomerase 2">
    <location>
        <begin position="39"/>
        <end position="394"/>
    </location>
</feature>
<feature type="domain" description="ACB" evidence="6">
    <location>
        <begin position="39"/>
        <end position="124"/>
    </location>
</feature>
<feature type="region of interest" description="ECH-like">
    <location>
        <begin position="151"/>
        <end position="322"/>
    </location>
</feature>
<feature type="short sequence motif" description="Microbody targeting signal" evidence="5">
    <location>
        <begin position="392"/>
        <end position="394"/>
    </location>
</feature>
<feature type="binding site" evidence="1">
    <location>
        <begin position="66"/>
        <end position="70"/>
    </location>
    <ligand>
        <name>an acyl-CoA</name>
        <dbReference type="ChEBI" id="CHEBI:58342"/>
    </ligand>
</feature>
<feature type="binding site" evidence="1">
    <location>
        <position position="92"/>
    </location>
    <ligand>
        <name>an acyl-CoA</name>
        <dbReference type="ChEBI" id="CHEBI:58342"/>
    </ligand>
</feature>
<feature type="binding site" evidence="1">
    <location>
        <position position="111"/>
    </location>
    <ligand>
        <name>an acyl-CoA</name>
        <dbReference type="ChEBI" id="CHEBI:58342"/>
    </ligand>
</feature>
<feature type="binding site" evidence="2">
    <location>
        <begin position="198"/>
        <end position="202"/>
    </location>
    <ligand>
        <name>substrate</name>
    </ligand>
</feature>
<feature type="site" description="Important for catalytic activity" evidence="2">
    <location>
        <position position="280"/>
    </location>
</feature>
<feature type="modified residue" description="N6-acetyllysine; alternate" evidence="17">
    <location>
        <position position="51"/>
    </location>
</feature>
<feature type="modified residue" description="N6-succinyllysine; alternate" evidence="4">
    <location>
        <position position="51"/>
    </location>
</feature>
<feature type="modified residue" description="N6-succinyllysine" evidence="4">
    <location>
        <position position="55"/>
    </location>
</feature>
<feature type="modified residue" description="N6-acetyllysine; alternate" evidence="4">
    <location>
        <position position="62"/>
    </location>
</feature>
<feature type="modified residue" description="N6-succinyllysine; alternate" evidence="4">
    <location>
        <position position="62"/>
    </location>
</feature>
<feature type="modified residue" description="N6-succinyllysine" evidence="4">
    <location>
        <position position="70"/>
    </location>
</feature>
<feature type="modified residue" description="N6-succinyllysine" evidence="4">
    <location>
        <position position="81"/>
    </location>
</feature>
<feature type="modified residue" description="N6-succinyllysine" evidence="4">
    <location>
        <position position="90"/>
    </location>
</feature>
<feature type="modified residue" description="N6-acetyllysine; alternate" evidence="17">
    <location>
        <position position="92"/>
    </location>
</feature>
<feature type="modified residue" description="N6-succinyllysine; alternate" evidence="4">
    <location>
        <position position="92"/>
    </location>
</feature>
<feature type="modified residue" description="Phosphoserine" evidence="19">
    <location>
        <position position="101"/>
    </location>
</feature>
<feature type="modified residue" description="Phosphoserine" evidence="18">
    <location>
        <position position="119"/>
    </location>
</feature>
<feature type="modified residue" description="N6-succinyllysine" evidence="4">
    <location>
        <position position="161"/>
    </location>
</feature>
<feature type="modified residue" description="N6-succinyllysine" evidence="4">
    <location>
        <position position="289"/>
    </location>
</feature>
<feature type="splice variant" id="VSP_037854" description="In isoform 2." evidence="11 13 14">
    <location>
        <begin position="1"/>
        <end position="35"/>
    </location>
</feature>
<feature type="sequence variant" id="VAR_058493" description="In dbSNP:rs3177253.">
    <original>M</original>
    <variation>I</variation>
    <location>
        <position position="47"/>
    </location>
</feature>
<feature type="sequence variant" id="VAR_058494" description="In dbSNP:rs7166." evidence="7 9">
    <original>A</original>
    <variation>V</variation>
    <location>
        <position position="344"/>
    </location>
</feature>
<feature type="sequence conflict" description="In Ref. 2; CAB66577." evidence="15" ref="2">
    <original>S</original>
    <variation>C</variation>
    <location>
        <position position="119"/>
    </location>
</feature>
<feature type="sequence conflict" description="In Ref. 1; AAC19317." evidence="15" ref="1">
    <original>Y</original>
    <variation>C</variation>
    <location>
        <position position="195"/>
    </location>
</feature>
<feature type="helix" evidence="20">
    <location>
        <begin position="40"/>
        <end position="52"/>
    </location>
</feature>
<feature type="helix" evidence="20">
    <location>
        <begin position="59"/>
        <end position="69"/>
    </location>
</feature>
<feature type="turn" evidence="20">
    <location>
        <begin position="70"/>
        <end position="74"/>
    </location>
</feature>
<feature type="helix" evidence="20">
    <location>
        <begin position="87"/>
        <end position="99"/>
    </location>
</feature>
<feature type="helix" evidence="20">
    <location>
        <begin position="104"/>
        <end position="118"/>
    </location>
</feature>
<feature type="strand" evidence="23">
    <location>
        <begin position="140"/>
        <end position="147"/>
    </location>
</feature>
<feature type="strand" evidence="23">
    <location>
        <begin position="150"/>
        <end position="155"/>
    </location>
</feature>
<feature type="helix" evidence="23">
    <location>
        <begin position="158"/>
        <end position="160"/>
    </location>
</feature>
<feature type="helix" evidence="23">
    <location>
        <begin position="166"/>
        <end position="181"/>
    </location>
</feature>
<feature type="strand" evidence="23">
    <location>
        <begin position="185"/>
        <end position="192"/>
    </location>
</feature>
<feature type="helix" evidence="21">
    <location>
        <begin position="203"/>
        <end position="205"/>
    </location>
</feature>
<feature type="helix" evidence="23">
    <location>
        <begin position="212"/>
        <end position="232"/>
    </location>
</feature>
<feature type="strand" evidence="23">
    <location>
        <begin position="238"/>
        <end position="242"/>
    </location>
</feature>
<feature type="helix" evidence="23">
    <location>
        <begin position="249"/>
        <end position="252"/>
    </location>
</feature>
<feature type="helix" evidence="23">
    <location>
        <begin position="253"/>
        <end position="256"/>
    </location>
</feature>
<feature type="strand" evidence="23">
    <location>
        <begin position="258"/>
        <end position="263"/>
    </location>
</feature>
<feature type="strand" evidence="23">
    <location>
        <begin position="267"/>
        <end position="269"/>
    </location>
</feature>
<feature type="helix" evidence="23">
    <location>
        <begin position="273"/>
        <end position="275"/>
    </location>
</feature>
<feature type="helix" evidence="23">
    <location>
        <begin position="283"/>
        <end position="291"/>
    </location>
</feature>
<feature type="helix" evidence="23">
    <location>
        <begin position="293"/>
        <end position="300"/>
    </location>
</feature>
<feature type="strand" evidence="22">
    <location>
        <begin position="305"/>
        <end position="307"/>
    </location>
</feature>
<feature type="helix" evidence="23">
    <location>
        <begin position="308"/>
        <end position="313"/>
    </location>
</feature>
<feature type="strand" evidence="23">
    <location>
        <begin position="318"/>
        <end position="321"/>
    </location>
</feature>
<feature type="turn" evidence="23">
    <location>
        <begin position="323"/>
        <end position="325"/>
    </location>
</feature>
<feature type="helix" evidence="23">
    <location>
        <begin position="326"/>
        <end position="337"/>
    </location>
</feature>
<feature type="helix" evidence="23">
    <location>
        <begin position="342"/>
        <end position="353"/>
    </location>
</feature>
<feature type="helix" evidence="23">
    <location>
        <begin position="354"/>
        <end position="356"/>
    </location>
</feature>
<feature type="helix" evidence="23">
    <location>
        <begin position="357"/>
        <end position="375"/>
    </location>
</feature>
<feature type="helix" evidence="23">
    <location>
        <begin position="378"/>
        <end position="383"/>
    </location>
</feature>
<feature type="helix" evidence="23">
    <location>
        <begin position="385"/>
        <end position="388"/>
    </location>
</feature>
<sequence>MAMAYLAWRLARRSCPSSLQVTSFPVVQLHMNRTAMRASQKDFENSMNQVKLLKKDPGNEVKLKLYALYKQATEGPCNMPKPGVFDLINKAKWDAWNALGSLPKEAARQNYVDLVSSLSPSLESSSQVEPGTDRKSTGFETLVVTSEDGITKIMFNRPKKKNAINTEMYHEIMRALKAASKDDSIITVLTGNGDYYSSGNDLTNFTDIPPGGVEEKAKNNAVLLREFVGCFIDFPKPLIAVVNGPAVGISVTLLGLFDAVYASDRATFHTPFSHLGQSPEGCSSYTFPKIMSPAKATEMLIFGKKLTAGEACAQGLVTEVFPDSTFQKEVWTRLKAFAKLPPNALRISKEVIRKREREKLHAVNAEECNVLQGRWLSDECTNAVVNFLSRKSKL</sequence>
<evidence type="ECO:0000250" key="1"/>
<evidence type="ECO:0000250" key="2">
    <source>
        <dbReference type="UniProtKB" id="Q05871"/>
    </source>
</evidence>
<evidence type="ECO:0000250" key="3">
    <source>
        <dbReference type="UniProtKB" id="Q5XIC0"/>
    </source>
</evidence>
<evidence type="ECO:0000250" key="4">
    <source>
        <dbReference type="UniProtKB" id="Q9WUR2"/>
    </source>
</evidence>
<evidence type="ECO:0000255" key="5"/>
<evidence type="ECO:0000255" key="6">
    <source>
        <dbReference type="PROSITE-ProRule" id="PRU00573"/>
    </source>
</evidence>
<evidence type="ECO:0000269" key="7">
    <source>
    </source>
</evidence>
<evidence type="ECO:0000269" key="8">
    <source>
    </source>
</evidence>
<evidence type="ECO:0000269" key="9">
    <source>
    </source>
</evidence>
<evidence type="ECO:0000269" key="10">
    <source>
    </source>
</evidence>
<evidence type="ECO:0000303" key="11">
    <source>
    </source>
</evidence>
<evidence type="ECO:0000303" key="12">
    <source>
    </source>
</evidence>
<evidence type="ECO:0000303" key="13">
    <source>
    </source>
</evidence>
<evidence type="ECO:0000303" key="14">
    <source>
    </source>
</evidence>
<evidence type="ECO:0000305" key="15"/>
<evidence type="ECO:0000305" key="16">
    <source>
    </source>
</evidence>
<evidence type="ECO:0007744" key="17">
    <source>
    </source>
</evidence>
<evidence type="ECO:0007744" key="18">
    <source>
    </source>
</evidence>
<evidence type="ECO:0007744" key="19">
    <source>
    </source>
</evidence>
<evidence type="ECO:0007829" key="20">
    <source>
        <dbReference type="PDB" id="2CQU"/>
    </source>
</evidence>
<evidence type="ECO:0007829" key="21">
    <source>
        <dbReference type="PDB" id="2F6Q"/>
    </source>
</evidence>
<evidence type="ECO:0007829" key="22">
    <source>
        <dbReference type="PDB" id="4U18"/>
    </source>
</evidence>
<evidence type="ECO:0007829" key="23">
    <source>
        <dbReference type="PDB" id="4U19"/>
    </source>
</evidence>
<accession>O75521</accession>
<accession>Q5JYK5</accession>
<accession>Q5JYK7</accession>
<accession>Q7L124</accession>
<accession>Q8N0X0</accession>
<accession>Q9BUE9</accession>
<accession>Q9H0T9</accession>
<accession>Q9NQH1</accession>
<accession>Q9NYH7</accession>
<accession>Q9UN55</accession>
<dbReference type="EC" id="5.3.3.8" evidence="8"/>
<dbReference type="EMBL" id="AF069301">
    <property type="protein sequence ID" value="AAC19317.1"/>
    <property type="status" value="ALT_INIT"/>
    <property type="molecule type" value="mRNA"/>
</dbReference>
<dbReference type="EMBL" id="AL136642">
    <property type="protein sequence ID" value="CAB66577.1"/>
    <property type="molecule type" value="mRNA"/>
</dbReference>
<dbReference type="EMBL" id="AK075108">
    <property type="protein sequence ID" value="BAG52068.1"/>
    <property type="status" value="ALT_INIT"/>
    <property type="molecule type" value="mRNA"/>
</dbReference>
<dbReference type="EMBL" id="AL033383">
    <property type="status" value="NOT_ANNOTATED_CDS"/>
    <property type="molecule type" value="Genomic_DNA"/>
</dbReference>
<dbReference type="EMBL" id="BC002668">
    <property type="protein sequence ID" value="AAH02668.3"/>
    <property type="status" value="ALT_INIT"/>
    <property type="molecule type" value="mRNA"/>
</dbReference>
<dbReference type="EMBL" id="BC016781">
    <property type="protein sequence ID" value="AAH16781.1"/>
    <property type="status" value="ALT_INIT"/>
    <property type="molecule type" value="mRNA"/>
</dbReference>
<dbReference type="EMBL" id="BC017474">
    <property type="protein sequence ID" value="AAH17474.1"/>
    <property type="status" value="ALT_INIT"/>
    <property type="molecule type" value="mRNA"/>
</dbReference>
<dbReference type="EMBL" id="BC033841">
    <property type="protein sequence ID" value="AAH33841.3"/>
    <property type="status" value="ALT_INIT"/>
    <property type="molecule type" value="mRNA"/>
</dbReference>
<dbReference type="EMBL" id="BC034702">
    <property type="protein sequence ID" value="AAH34702.1"/>
    <property type="status" value="ALT_INIT"/>
    <property type="molecule type" value="mRNA"/>
</dbReference>
<dbReference type="EMBL" id="AF153612">
    <property type="protein sequence ID" value="AAD34173.1"/>
    <property type="status" value="ALT_INIT"/>
    <property type="molecule type" value="mRNA"/>
</dbReference>
<dbReference type="EMBL" id="AF244138">
    <property type="protein sequence ID" value="AAF66247.1"/>
    <property type="status" value="ALT_INIT"/>
    <property type="molecule type" value="mRNA"/>
</dbReference>
<dbReference type="CCDS" id="CCDS43420.2">
    <molecule id="O75521-1"/>
</dbReference>
<dbReference type="RefSeq" id="NP_001159482.1">
    <property type="nucleotide sequence ID" value="NM_001166010.1"/>
</dbReference>
<dbReference type="RefSeq" id="NP_006108.2">
    <property type="nucleotide sequence ID" value="NM_006117.2"/>
</dbReference>
<dbReference type="RefSeq" id="NP_996667.2">
    <molecule id="O75521-1"/>
    <property type="nucleotide sequence ID" value="NM_206836.3"/>
</dbReference>
<dbReference type="PDB" id="2CQU">
    <property type="method" value="NMR"/>
    <property type="chains" value="A=31-133"/>
</dbReference>
<dbReference type="PDB" id="2F6Q">
    <property type="method" value="X-ray"/>
    <property type="resolution" value="1.95 A"/>
    <property type="chains" value="A/B/C=138-394"/>
</dbReference>
<dbReference type="PDB" id="4U18">
    <property type="method" value="X-ray"/>
    <property type="resolution" value="2.64 A"/>
    <property type="chains" value="A/B/C=138-390"/>
</dbReference>
<dbReference type="PDB" id="4U19">
    <property type="method" value="X-ray"/>
    <property type="resolution" value="1.88 A"/>
    <property type="chains" value="A/B/C=138-390"/>
</dbReference>
<dbReference type="PDB" id="4U1A">
    <property type="method" value="X-ray"/>
    <property type="resolution" value="2.85 A"/>
    <property type="chains" value="A/B/C=138-384"/>
</dbReference>
<dbReference type="PDBsum" id="2CQU"/>
<dbReference type="PDBsum" id="2F6Q"/>
<dbReference type="PDBsum" id="4U18"/>
<dbReference type="PDBsum" id="4U19"/>
<dbReference type="PDBsum" id="4U1A"/>
<dbReference type="SMR" id="O75521"/>
<dbReference type="BioGRID" id="115718">
    <property type="interactions" value="119"/>
</dbReference>
<dbReference type="FunCoup" id="O75521">
    <property type="interactions" value="1680"/>
</dbReference>
<dbReference type="IntAct" id="O75521">
    <property type="interactions" value="85"/>
</dbReference>
<dbReference type="MINT" id="O75521"/>
<dbReference type="STRING" id="9606.ENSP00000369461"/>
<dbReference type="DrugBank" id="DB08231">
    <property type="generic name" value="Myristic acid"/>
</dbReference>
<dbReference type="SwissLipids" id="SLP:000001195">
    <molecule id="O75521-2"/>
</dbReference>
<dbReference type="GlyGen" id="O75521">
    <property type="glycosylation" value="1 site, 1 O-linked glycan (1 site)"/>
</dbReference>
<dbReference type="iPTMnet" id="O75521"/>
<dbReference type="MetOSite" id="O75521"/>
<dbReference type="PhosphoSitePlus" id="O75521"/>
<dbReference type="SwissPalm" id="O75521"/>
<dbReference type="BioMuta" id="ECI2"/>
<dbReference type="REPRODUCTION-2DPAGE" id="IPI00419263"/>
<dbReference type="jPOST" id="O75521"/>
<dbReference type="MassIVE" id="O75521"/>
<dbReference type="PaxDb" id="9606-ENSP00000369461"/>
<dbReference type="PeptideAtlas" id="O75521"/>
<dbReference type="ProteomicsDB" id="50059">
    <molecule id="O75521-1"/>
</dbReference>
<dbReference type="ProteomicsDB" id="50060">
    <molecule id="O75521-2"/>
</dbReference>
<dbReference type="Pumba" id="O75521"/>
<dbReference type="Antibodypedia" id="9554">
    <property type="antibodies" value="290 antibodies from 33 providers"/>
</dbReference>
<dbReference type="DNASU" id="10455"/>
<dbReference type="Ensembl" id="ENST00000380118.8">
    <molecule id="O75521-1"/>
    <property type="protein sequence ID" value="ENSP00000369461.3"/>
    <property type="gene ID" value="ENSG00000198721.13"/>
</dbReference>
<dbReference type="GeneID" id="10455"/>
<dbReference type="KEGG" id="hsa:10455"/>
<dbReference type="MANE-Select" id="ENST00000380118.8">
    <property type="protein sequence ID" value="ENSP00000369461.3"/>
    <property type="RefSeq nucleotide sequence ID" value="NM_206836.3"/>
    <property type="RefSeq protein sequence ID" value="NP_996667.2"/>
</dbReference>
<dbReference type="UCSC" id="uc003mwd.4">
    <molecule id="O75521-1"/>
    <property type="organism name" value="human"/>
</dbReference>
<dbReference type="AGR" id="HGNC:14601"/>
<dbReference type="CTD" id="10455"/>
<dbReference type="DisGeNET" id="10455"/>
<dbReference type="GeneCards" id="ECI2"/>
<dbReference type="HGNC" id="HGNC:14601">
    <property type="gene designation" value="ECI2"/>
</dbReference>
<dbReference type="HPA" id="ENSG00000198721">
    <property type="expression patterns" value="Tissue enhanced (liver)"/>
</dbReference>
<dbReference type="MIM" id="608024">
    <property type="type" value="gene"/>
</dbReference>
<dbReference type="neXtProt" id="NX_O75521"/>
<dbReference type="OpenTargets" id="ENSG00000198721"/>
<dbReference type="PharmGKB" id="PA33168"/>
<dbReference type="VEuPathDB" id="HostDB:ENSG00000198721"/>
<dbReference type="eggNOG" id="KOG0016">
    <property type="taxonomic scope" value="Eukaryota"/>
</dbReference>
<dbReference type="eggNOG" id="KOG0817">
    <property type="taxonomic scope" value="Eukaryota"/>
</dbReference>
<dbReference type="GeneTree" id="ENSGT00940000155105"/>
<dbReference type="InParanoid" id="O75521"/>
<dbReference type="OMA" id="LHCDFVY"/>
<dbReference type="OrthoDB" id="409763at2759"/>
<dbReference type="PAN-GO" id="O75521">
    <property type="GO annotations" value="5 GO annotations based on evolutionary models"/>
</dbReference>
<dbReference type="PhylomeDB" id="O75521"/>
<dbReference type="TreeFam" id="TF313375"/>
<dbReference type="BioCyc" id="MetaCyc:HS03615-MONOMER"/>
<dbReference type="BRENDA" id="5.3.3.8">
    <property type="organism ID" value="2681"/>
</dbReference>
<dbReference type="PathwayCommons" id="O75521"/>
<dbReference type="Reactome" id="R-HSA-390247">
    <molecule id="O75521-2"/>
    <property type="pathway name" value="Beta-oxidation of very long chain fatty acids"/>
</dbReference>
<dbReference type="Reactome" id="R-HSA-9033241">
    <molecule id="O75521-2"/>
    <property type="pathway name" value="Peroxisomal protein import"/>
</dbReference>
<dbReference type="SignaLink" id="O75521"/>
<dbReference type="UniPathway" id="UPA00659"/>
<dbReference type="BioGRID-ORCS" id="10455">
    <property type="hits" value="10 hits in 1159 CRISPR screens"/>
</dbReference>
<dbReference type="CD-CODE" id="FB4E32DD">
    <property type="entry name" value="Presynaptic clusters and postsynaptic densities"/>
</dbReference>
<dbReference type="ChiTaRS" id="ECI2">
    <property type="organism name" value="human"/>
</dbReference>
<dbReference type="EvolutionaryTrace" id="O75521"/>
<dbReference type="GeneWiki" id="PECI_(gene)"/>
<dbReference type="GenomeRNAi" id="10455"/>
<dbReference type="Pharos" id="O75521">
    <property type="development level" value="Tbio"/>
</dbReference>
<dbReference type="PRO" id="PR:O75521"/>
<dbReference type="Proteomes" id="UP000005640">
    <property type="component" value="Chromosome 6"/>
</dbReference>
<dbReference type="RNAct" id="O75521">
    <property type="molecule type" value="protein"/>
</dbReference>
<dbReference type="Bgee" id="ENSG00000198721">
    <property type="expression patterns" value="Expressed in adrenal tissue and 197 other cell types or tissues"/>
</dbReference>
<dbReference type="ExpressionAtlas" id="O75521">
    <property type="expression patterns" value="baseline and differential"/>
</dbReference>
<dbReference type="GO" id="GO:0005829">
    <property type="term" value="C:cytosol"/>
    <property type="evidence" value="ECO:0000304"/>
    <property type="project" value="Reactome"/>
</dbReference>
<dbReference type="GO" id="GO:0043231">
    <property type="term" value="C:intracellular membrane-bounded organelle"/>
    <property type="evidence" value="ECO:0000314"/>
    <property type="project" value="HPA"/>
</dbReference>
<dbReference type="GO" id="GO:0016020">
    <property type="term" value="C:membrane"/>
    <property type="evidence" value="ECO:0007005"/>
    <property type="project" value="UniProtKB"/>
</dbReference>
<dbReference type="GO" id="GO:0005739">
    <property type="term" value="C:mitochondrion"/>
    <property type="evidence" value="ECO:0000314"/>
    <property type="project" value="LIFEdb"/>
</dbReference>
<dbReference type="GO" id="GO:0005782">
    <property type="term" value="C:peroxisomal matrix"/>
    <property type="evidence" value="ECO:0000314"/>
    <property type="project" value="UniProtKB"/>
</dbReference>
<dbReference type="GO" id="GO:0005777">
    <property type="term" value="C:peroxisome"/>
    <property type="evidence" value="ECO:0000314"/>
    <property type="project" value="HPA"/>
</dbReference>
<dbReference type="GO" id="GO:0004165">
    <property type="term" value="F:delta(3)-delta(2)-enoyl-CoA isomerase activity"/>
    <property type="evidence" value="ECO:0000314"/>
    <property type="project" value="UniProtKB"/>
</dbReference>
<dbReference type="GO" id="GO:0000062">
    <property type="term" value="F:fatty-acyl-CoA binding"/>
    <property type="evidence" value="ECO:0007669"/>
    <property type="project" value="InterPro"/>
</dbReference>
<dbReference type="GO" id="GO:0006635">
    <property type="term" value="P:fatty acid beta-oxidation"/>
    <property type="evidence" value="ECO:0000250"/>
    <property type="project" value="UniProtKB"/>
</dbReference>
<dbReference type="GO" id="GO:0009062">
    <property type="term" value="P:fatty acid catabolic process"/>
    <property type="evidence" value="ECO:0000314"/>
    <property type="project" value="UniProtKB"/>
</dbReference>
<dbReference type="CDD" id="cd06558">
    <property type="entry name" value="crotonase-like"/>
    <property type="match status" value="1"/>
</dbReference>
<dbReference type="FunFam" id="1.10.12.10:FF:000013">
    <property type="entry name" value="Enoyl-CoA delta isomerase 2, mitochondrial"/>
    <property type="match status" value="1"/>
</dbReference>
<dbReference type="FunFam" id="1.20.80.10:FF:000026">
    <property type="entry name" value="Enoyl-CoA delta isomerase 2, mitochondrial"/>
    <property type="match status" value="1"/>
</dbReference>
<dbReference type="FunFam" id="3.90.226.10:FF:000084">
    <property type="entry name" value="Enoyl-CoA delta isomerase 2, mitochondrial"/>
    <property type="match status" value="1"/>
</dbReference>
<dbReference type="Gene3D" id="1.20.80.10">
    <property type="match status" value="1"/>
</dbReference>
<dbReference type="Gene3D" id="3.90.226.10">
    <property type="entry name" value="2-enoyl-CoA Hydratase, Chain A, domain 1"/>
    <property type="match status" value="1"/>
</dbReference>
<dbReference type="Gene3D" id="1.10.12.10">
    <property type="entry name" value="Lyase 2-enoyl-coa Hydratase, Chain A, domain 2"/>
    <property type="match status" value="1"/>
</dbReference>
<dbReference type="InterPro" id="IPR022408">
    <property type="entry name" value="Acyl-CoA-binding_prot_CS"/>
</dbReference>
<dbReference type="InterPro" id="IPR000582">
    <property type="entry name" value="Acyl-CoA-binding_protein"/>
</dbReference>
<dbReference type="InterPro" id="IPR035984">
    <property type="entry name" value="Acyl-CoA-binding_sf"/>
</dbReference>
<dbReference type="InterPro" id="IPR029045">
    <property type="entry name" value="ClpP/crotonase-like_dom_sf"/>
</dbReference>
<dbReference type="InterPro" id="IPR051053">
    <property type="entry name" value="ECH/Chromodomain_protein"/>
</dbReference>
<dbReference type="InterPro" id="IPR001753">
    <property type="entry name" value="Enoyl-CoA_hydra/iso"/>
</dbReference>
<dbReference type="InterPro" id="IPR014748">
    <property type="entry name" value="Enoyl-CoA_hydra_C"/>
</dbReference>
<dbReference type="InterPro" id="IPR014352">
    <property type="entry name" value="FERM/acyl-CoA-bd_prot_sf"/>
</dbReference>
<dbReference type="PANTHER" id="PTHR43684">
    <property type="match status" value="1"/>
</dbReference>
<dbReference type="PANTHER" id="PTHR43684:SF1">
    <property type="entry name" value="ENOYL-COA DELTA ISOMERASE 2"/>
    <property type="match status" value="1"/>
</dbReference>
<dbReference type="Pfam" id="PF00887">
    <property type="entry name" value="ACBP"/>
    <property type="match status" value="1"/>
</dbReference>
<dbReference type="Pfam" id="PF00378">
    <property type="entry name" value="ECH_1"/>
    <property type="match status" value="1"/>
</dbReference>
<dbReference type="PRINTS" id="PR00689">
    <property type="entry name" value="ACOABINDINGP"/>
</dbReference>
<dbReference type="SUPFAM" id="SSF47027">
    <property type="entry name" value="Acyl-CoA binding protein"/>
    <property type="match status" value="1"/>
</dbReference>
<dbReference type="SUPFAM" id="SSF52096">
    <property type="entry name" value="ClpP/crotonase"/>
    <property type="match status" value="1"/>
</dbReference>
<dbReference type="PROSITE" id="PS00880">
    <property type="entry name" value="ACB_1"/>
    <property type="match status" value="1"/>
</dbReference>
<dbReference type="PROSITE" id="PS51228">
    <property type="entry name" value="ACB_2"/>
    <property type="match status" value="1"/>
</dbReference>
<name>ECI2_HUMAN</name>
<reference key="1">
    <citation type="journal article" date="1999" name="Biochim. Biophys. Acta">
        <title>Molecular cloning and expression of a novel human cDNA related to the diazepam binding inhibitor.</title>
        <authorList>
            <person name="Suk K."/>
            <person name="Kim Y.-H."/>
            <person name="Hwang D.-Y."/>
            <person name="Ihm S.-H."/>
            <person name="Yoo H.J."/>
            <person name="Lee M.-S."/>
        </authorList>
    </citation>
    <scope>NUCLEOTIDE SEQUENCE [MRNA] (ISOFORM 2)</scope>
    <scope>VARIANT VAL-344</scope>
    <source>
        <tissue>Pancreatic islet</tissue>
    </source>
</reference>
<reference key="2">
    <citation type="journal article" date="2001" name="Genome Res.">
        <title>Towards a catalog of human genes and proteins: sequencing and analysis of 500 novel complete protein coding human cDNAs.</title>
        <authorList>
            <person name="Wiemann S."/>
            <person name="Weil B."/>
            <person name="Wellenreuther R."/>
            <person name="Gassenhuber J."/>
            <person name="Glassl S."/>
            <person name="Ansorge W."/>
            <person name="Boecher M."/>
            <person name="Bloecker H."/>
            <person name="Bauersachs S."/>
            <person name="Blum H."/>
            <person name="Lauber J."/>
            <person name="Duesterhoeft A."/>
            <person name="Beyer A."/>
            <person name="Koehrer K."/>
            <person name="Strack N."/>
            <person name="Mewes H.-W."/>
            <person name="Ottenwaelder B."/>
            <person name="Obermaier B."/>
            <person name="Tampe J."/>
            <person name="Heubner D."/>
            <person name="Wambutt R."/>
            <person name="Korn B."/>
            <person name="Klein M."/>
            <person name="Poustka A."/>
        </authorList>
    </citation>
    <scope>NUCLEOTIDE SEQUENCE [LARGE SCALE MRNA] (ISOFORM 1)</scope>
    <source>
        <tissue>Brain</tissue>
    </source>
</reference>
<reference key="3">
    <citation type="journal article" date="2004" name="Nat. Genet.">
        <title>Complete sequencing and characterization of 21,243 full-length human cDNAs.</title>
        <authorList>
            <person name="Ota T."/>
            <person name="Suzuki Y."/>
            <person name="Nishikawa T."/>
            <person name="Otsuki T."/>
            <person name="Sugiyama T."/>
            <person name="Irie R."/>
            <person name="Wakamatsu A."/>
            <person name="Hayashi K."/>
            <person name="Sato H."/>
            <person name="Nagai K."/>
            <person name="Kimura K."/>
            <person name="Makita H."/>
            <person name="Sekine M."/>
            <person name="Obayashi M."/>
            <person name="Nishi T."/>
            <person name="Shibahara T."/>
            <person name="Tanaka T."/>
            <person name="Ishii S."/>
            <person name="Yamamoto J."/>
            <person name="Saito K."/>
            <person name="Kawai Y."/>
            <person name="Isono Y."/>
            <person name="Nakamura Y."/>
            <person name="Nagahari K."/>
            <person name="Murakami K."/>
            <person name="Yasuda T."/>
            <person name="Iwayanagi T."/>
            <person name="Wagatsuma M."/>
            <person name="Shiratori A."/>
            <person name="Sudo H."/>
            <person name="Hosoiri T."/>
            <person name="Kaku Y."/>
            <person name="Kodaira H."/>
            <person name="Kondo H."/>
            <person name="Sugawara M."/>
            <person name="Takahashi M."/>
            <person name="Kanda K."/>
            <person name="Yokoi T."/>
            <person name="Furuya T."/>
            <person name="Kikkawa E."/>
            <person name="Omura Y."/>
            <person name="Abe K."/>
            <person name="Kamihara K."/>
            <person name="Katsuta N."/>
            <person name="Sato K."/>
            <person name="Tanikawa M."/>
            <person name="Yamazaki M."/>
            <person name="Ninomiya K."/>
            <person name="Ishibashi T."/>
            <person name="Yamashita H."/>
            <person name="Murakawa K."/>
            <person name="Fujimori K."/>
            <person name="Tanai H."/>
            <person name="Kimata M."/>
            <person name="Watanabe M."/>
            <person name="Hiraoka S."/>
            <person name="Chiba Y."/>
            <person name="Ishida S."/>
            <person name="Ono Y."/>
            <person name="Takiguchi S."/>
            <person name="Watanabe S."/>
            <person name="Yosida M."/>
            <person name="Hotuta T."/>
            <person name="Kusano J."/>
            <person name="Kanehori K."/>
            <person name="Takahashi-Fujii A."/>
            <person name="Hara H."/>
            <person name="Tanase T.-O."/>
            <person name="Nomura Y."/>
            <person name="Togiya S."/>
            <person name="Komai F."/>
            <person name="Hara R."/>
            <person name="Takeuchi K."/>
            <person name="Arita M."/>
            <person name="Imose N."/>
            <person name="Musashino K."/>
            <person name="Yuuki H."/>
            <person name="Oshima A."/>
            <person name="Sasaki N."/>
            <person name="Aotsuka S."/>
            <person name="Yoshikawa Y."/>
            <person name="Matsunawa H."/>
            <person name="Ichihara T."/>
            <person name="Shiohata N."/>
            <person name="Sano S."/>
            <person name="Moriya S."/>
            <person name="Momiyama H."/>
            <person name="Satoh N."/>
            <person name="Takami S."/>
            <person name="Terashima Y."/>
            <person name="Suzuki O."/>
            <person name="Nakagawa S."/>
            <person name="Senoh A."/>
            <person name="Mizoguchi H."/>
            <person name="Goto Y."/>
            <person name="Shimizu F."/>
            <person name="Wakebe H."/>
            <person name="Hishigaki H."/>
            <person name="Watanabe T."/>
            <person name="Sugiyama A."/>
            <person name="Takemoto M."/>
            <person name="Kawakami B."/>
            <person name="Yamazaki M."/>
            <person name="Watanabe K."/>
            <person name="Kumagai A."/>
            <person name="Itakura S."/>
            <person name="Fukuzumi Y."/>
            <person name="Fujimori Y."/>
            <person name="Komiyama M."/>
            <person name="Tashiro H."/>
            <person name="Tanigami A."/>
            <person name="Fujiwara T."/>
            <person name="Ono T."/>
            <person name="Yamada K."/>
            <person name="Fujii Y."/>
            <person name="Ozaki K."/>
            <person name="Hirao M."/>
            <person name="Ohmori Y."/>
            <person name="Kawabata A."/>
            <person name="Hikiji T."/>
            <person name="Kobatake N."/>
            <person name="Inagaki H."/>
            <person name="Ikema Y."/>
            <person name="Okamoto S."/>
            <person name="Okitani R."/>
            <person name="Kawakami T."/>
            <person name="Noguchi S."/>
            <person name="Itoh T."/>
            <person name="Shigeta K."/>
            <person name="Senba T."/>
            <person name="Matsumura K."/>
            <person name="Nakajima Y."/>
            <person name="Mizuno T."/>
            <person name="Morinaga M."/>
            <person name="Sasaki M."/>
            <person name="Togashi T."/>
            <person name="Oyama M."/>
            <person name="Hata H."/>
            <person name="Watanabe M."/>
            <person name="Komatsu T."/>
            <person name="Mizushima-Sugano J."/>
            <person name="Satoh T."/>
            <person name="Shirai Y."/>
            <person name="Takahashi Y."/>
            <person name="Nakagawa K."/>
            <person name="Okumura K."/>
            <person name="Nagase T."/>
            <person name="Nomura N."/>
            <person name="Kikuchi H."/>
            <person name="Masuho Y."/>
            <person name="Yamashita R."/>
            <person name="Nakai K."/>
            <person name="Yada T."/>
            <person name="Nakamura Y."/>
            <person name="Ohara O."/>
            <person name="Isogai T."/>
            <person name="Sugano S."/>
        </authorList>
    </citation>
    <scope>NUCLEOTIDE SEQUENCE [LARGE SCALE MRNA] (ISOFORM 2)</scope>
    <source>
        <tissue>Placenta</tissue>
    </source>
</reference>
<reference key="4">
    <citation type="journal article" date="2003" name="Nature">
        <title>The DNA sequence and analysis of human chromosome 6.</title>
        <authorList>
            <person name="Mungall A.J."/>
            <person name="Palmer S.A."/>
            <person name="Sims S.K."/>
            <person name="Edwards C.A."/>
            <person name="Ashurst J.L."/>
            <person name="Wilming L."/>
            <person name="Jones M.C."/>
            <person name="Horton R."/>
            <person name="Hunt S.E."/>
            <person name="Scott C.E."/>
            <person name="Gilbert J.G.R."/>
            <person name="Clamp M.E."/>
            <person name="Bethel G."/>
            <person name="Milne S."/>
            <person name="Ainscough R."/>
            <person name="Almeida J.P."/>
            <person name="Ambrose K.D."/>
            <person name="Andrews T.D."/>
            <person name="Ashwell R.I.S."/>
            <person name="Babbage A.K."/>
            <person name="Bagguley C.L."/>
            <person name="Bailey J."/>
            <person name="Banerjee R."/>
            <person name="Barker D.J."/>
            <person name="Barlow K.F."/>
            <person name="Bates K."/>
            <person name="Beare D.M."/>
            <person name="Beasley H."/>
            <person name="Beasley O."/>
            <person name="Bird C.P."/>
            <person name="Blakey S.E."/>
            <person name="Bray-Allen S."/>
            <person name="Brook J."/>
            <person name="Brown A.J."/>
            <person name="Brown J.Y."/>
            <person name="Burford D.C."/>
            <person name="Burrill W."/>
            <person name="Burton J."/>
            <person name="Carder C."/>
            <person name="Carter N.P."/>
            <person name="Chapman J.C."/>
            <person name="Clark S.Y."/>
            <person name="Clark G."/>
            <person name="Clee C.M."/>
            <person name="Clegg S."/>
            <person name="Cobley V."/>
            <person name="Collier R.E."/>
            <person name="Collins J.E."/>
            <person name="Colman L.K."/>
            <person name="Corby N.R."/>
            <person name="Coville G.J."/>
            <person name="Culley K.M."/>
            <person name="Dhami P."/>
            <person name="Davies J."/>
            <person name="Dunn M."/>
            <person name="Earthrowl M.E."/>
            <person name="Ellington A.E."/>
            <person name="Evans K.A."/>
            <person name="Faulkner L."/>
            <person name="Francis M.D."/>
            <person name="Frankish A."/>
            <person name="Frankland J."/>
            <person name="French L."/>
            <person name="Garner P."/>
            <person name="Garnett J."/>
            <person name="Ghori M.J."/>
            <person name="Gilby L.M."/>
            <person name="Gillson C.J."/>
            <person name="Glithero R.J."/>
            <person name="Grafham D.V."/>
            <person name="Grant M."/>
            <person name="Gribble S."/>
            <person name="Griffiths C."/>
            <person name="Griffiths M.N.D."/>
            <person name="Hall R."/>
            <person name="Halls K.S."/>
            <person name="Hammond S."/>
            <person name="Harley J.L."/>
            <person name="Hart E.A."/>
            <person name="Heath P.D."/>
            <person name="Heathcott R."/>
            <person name="Holmes S.J."/>
            <person name="Howden P.J."/>
            <person name="Howe K.L."/>
            <person name="Howell G.R."/>
            <person name="Huckle E."/>
            <person name="Humphray S.J."/>
            <person name="Humphries M.D."/>
            <person name="Hunt A.R."/>
            <person name="Johnson C.M."/>
            <person name="Joy A.A."/>
            <person name="Kay M."/>
            <person name="Keenan S.J."/>
            <person name="Kimberley A.M."/>
            <person name="King A."/>
            <person name="Laird G.K."/>
            <person name="Langford C."/>
            <person name="Lawlor S."/>
            <person name="Leongamornlert D.A."/>
            <person name="Leversha M."/>
            <person name="Lloyd C.R."/>
            <person name="Lloyd D.M."/>
            <person name="Loveland J.E."/>
            <person name="Lovell J."/>
            <person name="Martin S."/>
            <person name="Mashreghi-Mohammadi M."/>
            <person name="Maslen G.L."/>
            <person name="Matthews L."/>
            <person name="McCann O.T."/>
            <person name="McLaren S.J."/>
            <person name="McLay K."/>
            <person name="McMurray A."/>
            <person name="Moore M.J.F."/>
            <person name="Mullikin J.C."/>
            <person name="Niblett D."/>
            <person name="Nickerson T."/>
            <person name="Novik K.L."/>
            <person name="Oliver K."/>
            <person name="Overton-Larty E.K."/>
            <person name="Parker A."/>
            <person name="Patel R."/>
            <person name="Pearce A.V."/>
            <person name="Peck A.I."/>
            <person name="Phillimore B.J.C.T."/>
            <person name="Phillips S."/>
            <person name="Plumb R.W."/>
            <person name="Porter K.M."/>
            <person name="Ramsey Y."/>
            <person name="Ranby S.A."/>
            <person name="Rice C.M."/>
            <person name="Ross M.T."/>
            <person name="Searle S.M."/>
            <person name="Sehra H.K."/>
            <person name="Sheridan E."/>
            <person name="Skuce C.D."/>
            <person name="Smith S."/>
            <person name="Smith M."/>
            <person name="Spraggon L."/>
            <person name="Squares S.L."/>
            <person name="Steward C.A."/>
            <person name="Sycamore N."/>
            <person name="Tamlyn-Hall G."/>
            <person name="Tester J."/>
            <person name="Theaker A.J."/>
            <person name="Thomas D.W."/>
            <person name="Thorpe A."/>
            <person name="Tracey A."/>
            <person name="Tromans A."/>
            <person name="Tubby B."/>
            <person name="Wall M."/>
            <person name="Wallis J.M."/>
            <person name="West A.P."/>
            <person name="White S.S."/>
            <person name="Whitehead S.L."/>
            <person name="Whittaker H."/>
            <person name="Wild A."/>
            <person name="Willey D.J."/>
            <person name="Wilmer T.E."/>
            <person name="Wood J.M."/>
            <person name="Wray P.W."/>
            <person name="Wyatt J.C."/>
            <person name="Young L."/>
            <person name="Younger R.M."/>
            <person name="Bentley D.R."/>
            <person name="Coulson A."/>
            <person name="Durbin R.M."/>
            <person name="Hubbard T."/>
            <person name="Sulston J.E."/>
            <person name="Dunham I."/>
            <person name="Rogers J."/>
            <person name="Beck S."/>
        </authorList>
    </citation>
    <scope>NUCLEOTIDE SEQUENCE [LARGE SCALE GENOMIC DNA]</scope>
</reference>
<reference key="5">
    <citation type="journal article" date="2004" name="Genome Res.">
        <title>The status, quality, and expansion of the NIH full-length cDNA project: the Mammalian Gene Collection (MGC).</title>
        <authorList>
            <consortium name="The MGC Project Team"/>
        </authorList>
    </citation>
    <scope>NUCLEOTIDE SEQUENCE [LARGE SCALE MRNA] (ISOFORMS 1 AND 2)</scope>
    <source>
        <tissue>Bone marrow</tissue>
        <tissue>Skin</tissue>
        <tissue>Uterus</tissue>
    </source>
</reference>
<reference key="6">
    <citation type="journal article" date="1999" name="J. Biol. Chem.">
        <title>Characterization of PECI, a novel monofunctional D3,D2-enoyl-CoA isomerase of mammalian peroxisomes.</title>
        <authorList>
            <person name="Geisbrecht B.V."/>
            <person name="Zhang D."/>
            <person name="Schulz H."/>
            <person name="Gould S.J."/>
        </authorList>
    </citation>
    <scope>NUCLEOTIDE SEQUENCE [MRNA] OF 4-394 (ISOFORM 1)</scope>
    <scope>SUBCELLULAR LOCATION</scope>
    <scope>CATALYTIC ACTIVITY</scope>
    <scope>TISSUE SPECIFICITY</scope>
</reference>
<reference key="7">
    <citation type="journal article" date="2002" name="J. Immunol.">
        <title>Large scale identification of human hepatocellular carcinoma-associated antigens by autoantibodies.</title>
        <authorList>
            <person name="Wang Y."/>
            <person name="Han K.-J."/>
            <person name="Pang X.-W."/>
            <person name="Vaughan H.A."/>
            <person name="Qu W."/>
            <person name="Dong X.-Y."/>
            <person name="Peng J.-R."/>
            <person name="Zhao H.-T."/>
            <person name="Rui J.-A."/>
            <person name="Leng X.-S."/>
            <person name="Cebon J."/>
            <person name="Burgess A.W."/>
            <person name="Chen W.-F."/>
        </authorList>
    </citation>
    <scope>NUCLEOTIDE SEQUENCE [MRNA] OF 4-394 (ISOFORM 1)</scope>
    <scope>VARIANT VAL-344</scope>
    <source>
        <tissue>Hepatoma</tissue>
    </source>
</reference>
<reference key="8">
    <citation type="journal article" date="1999" name="Int. J. Cancer">
        <title>Antigens recognized by autologous antibody in patients with renal-cell carcinoma.</title>
        <authorList>
            <person name="Scanlan M.J."/>
            <person name="Gordan J.D."/>
            <person name="Williamson B."/>
            <person name="Stockert E."/>
            <person name="Bander N.H."/>
            <person name="Jongeneel C.V."/>
            <person name="Gure A.O."/>
            <person name="Jaeger D."/>
            <person name="Jaeger E."/>
            <person name="Knuth A."/>
            <person name="Chen Y.-T."/>
            <person name="Old L.J."/>
        </authorList>
    </citation>
    <scope>IDENTIFICATION AS A RENAL CANCER ANTIGEN</scope>
    <source>
        <tissue>Renal cell carcinoma</tissue>
    </source>
</reference>
<reference key="9">
    <citation type="journal article" date="2000" name="EMBO Rep.">
        <title>Systematic subcellular localization of novel proteins identified by large-scale cDNA sequencing.</title>
        <authorList>
            <person name="Simpson J.C."/>
            <person name="Wellenreuther R."/>
            <person name="Poustka A."/>
            <person name="Pepperkok R."/>
            <person name="Wiemann S."/>
        </authorList>
    </citation>
    <scope>SUBCELLULAR LOCATION</scope>
</reference>
<reference key="10">
    <citation type="journal article" date="2004" name="Blood">
        <title>Diazepam-binding inhibitor-related protein 1: a candidate autoantigen in acquired aplastic anemia patients harboring a minor population of paroxysmal nocturnal hemoglobinuria-type cells.</title>
        <authorList>
            <person name="Feng X."/>
            <person name="Chuhjo T."/>
            <person name="Sugimori C."/>
            <person name="Kotani T."/>
            <person name="Lu X."/>
            <person name="Takami A."/>
            <person name="Takamatsu H."/>
            <person name="Yamazaki H."/>
            <person name="Nakao S."/>
        </authorList>
    </citation>
    <scope>TISSUE SPECIFICITY</scope>
</reference>
<reference key="11">
    <citation type="journal article" date="2009" name="Science">
        <title>Lysine acetylation targets protein complexes and co-regulates major cellular functions.</title>
        <authorList>
            <person name="Choudhary C."/>
            <person name="Kumar C."/>
            <person name="Gnad F."/>
            <person name="Nielsen M.L."/>
            <person name="Rehman M."/>
            <person name="Walther T.C."/>
            <person name="Olsen J.V."/>
            <person name="Mann M."/>
        </authorList>
    </citation>
    <scope>ACETYLATION [LARGE SCALE ANALYSIS] AT LYS-51 AND LYS-92</scope>
    <scope>IDENTIFICATION BY MASS SPECTROMETRY [LARGE SCALE ANALYSIS]</scope>
</reference>
<reference key="12">
    <citation type="journal article" date="2011" name="BMC Syst. Biol.">
        <title>Initial characterization of the human central proteome.</title>
        <authorList>
            <person name="Burkard T.R."/>
            <person name="Planyavsky M."/>
            <person name="Kaupe I."/>
            <person name="Breitwieser F.P."/>
            <person name="Buerckstuemmer T."/>
            <person name="Bennett K.L."/>
            <person name="Superti-Furga G."/>
            <person name="Colinge J."/>
        </authorList>
    </citation>
    <scope>IDENTIFICATION BY MASS SPECTROMETRY [LARGE SCALE ANALYSIS]</scope>
</reference>
<reference key="13">
    <citation type="journal article" date="2013" name="J. Proteome Res.">
        <title>Toward a comprehensive characterization of a human cancer cell phosphoproteome.</title>
        <authorList>
            <person name="Zhou H."/>
            <person name="Di Palma S."/>
            <person name="Preisinger C."/>
            <person name="Peng M."/>
            <person name="Polat A.N."/>
            <person name="Heck A.J."/>
            <person name="Mohammed S."/>
        </authorList>
    </citation>
    <scope>PHOSPHORYLATION [LARGE SCALE ANALYSIS] AT SER-119</scope>
    <scope>IDENTIFICATION BY MASS SPECTROMETRY [LARGE SCALE ANALYSIS]</scope>
    <source>
        <tissue>Erythroleukemia</tissue>
    </source>
</reference>
<reference key="14">
    <citation type="journal article" date="2014" name="J. Proteomics">
        <title>An enzyme assisted RP-RPLC approach for in-depth analysis of human liver phosphoproteome.</title>
        <authorList>
            <person name="Bian Y."/>
            <person name="Song C."/>
            <person name="Cheng K."/>
            <person name="Dong M."/>
            <person name="Wang F."/>
            <person name="Huang J."/>
            <person name="Sun D."/>
            <person name="Wang L."/>
            <person name="Ye M."/>
            <person name="Zou H."/>
        </authorList>
    </citation>
    <scope>PHOSPHORYLATION [LARGE SCALE ANALYSIS] AT SER-101</scope>
    <scope>IDENTIFICATION BY MASS SPECTROMETRY [LARGE SCALE ANALYSIS]</scope>
    <source>
        <tissue>Liver</tissue>
    </source>
</reference>
<reference key="15">
    <citation type="journal article" date="2015" name="Proteomics">
        <title>N-terminome analysis of the human mitochondrial proteome.</title>
        <authorList>
            <person name="Vaca Jacome A.S."/>
            <person name="Rabilloud T."/>
            <person name="Schaeffer-Reiss C."/>
            <person name="Rompais M."/>
            <person name="Ayoub D."/>
            <person name="Lane L."/>
            <person name="Bairoch A."/>
            <person name="Van Dorsselaer A."/>
            <person name="Carapito C."/>
        </authorList>
    </citation>
    <scope>IDENTIFICATION BY MASS SPECTROMETRY [LARGE SCALE ANALYSIS]</scope>
</reference>
<reference key="16">
    <citation type="submission" date="2005-11" db="PDB data bank">
        <title>Solution structure of RSGI RUH-045, a human acyl-CoA binding protein.</title>
        <authorList>
            <consortium name="RIKEN structural genomics initiative (RSGI)"/>
        </authorList>
    </citation>
    <scope>STRUCTURE BY NMR OF 36-133</scope>
</reference>
<reference key="17">
    <citation type="submission" date="2009-02" db="PDB data bank">
        <title>The crystal structure of human peroxisomal delta3, delta2 enoyl-CoA isomerase (pECI).</title>
        <authorList>
            <consortium name="Structural genomics consortium (SGC)"/>
        </authorList>
    </citation>
    <scope>X-RAY CRYSTALLOGRAPHY (1.95 ANGSTROMS) OF 138-394</scope>
</reference>
<gene>
    <name type="primary">ECI2</name>
    <name type="synonym">DRS1</name>
    <name type="synonym">HCA88</name>
    <name evidence="12" type="synonym">PECI</name>
</gene>
<organism>
    <name type="scientific">Homo sapiens</name>
    <name type="common">Human</name>
    <dbReference type="NCBI Taxonomy" id="9606"/>
    <lineage>
        <taxon>Eukaryota</taxon>
        <taxon>Metazoa</taxon>
        <taxon>Chordata</taxon>
        <taxon>Craniata</taxon>
        <taxon>Vertebrata</taxon>
        <taxon>Euteleostomi</taxon>
        <taxon>Mammalia</taxon>
        <taxon>Eutheria</taxon>
        <taxon>Euarchontoglires</taxon>
        <taxon>Primates</taxon>
        <taxon>Haplorrhini</taxon>
        <taxon>Catarrhini</taxon>
        <taxon>Hominidae</taxon>
        <taxon>Homo</taxon>
    </lineage>
</organism>